<evidence type="ECO:0000255" key="1">
    <source>
        <dbReference type="HAMAP-Rule" id="MF_00087"/>
    </source>
</evidence>
<evidence type="ECO:0000256" key="2">
    <source>
        <dbReference type="SAM" id="MobiDB-lite"/>
    </source>
</evidence>
<proteinExistence type="inferred from homology"/>
<dbReference type="EC" id="1.2.1.70" evidence="1"/>
<dbReference type="EMBL" id="CP000141">
    <property type="protein sequence ID" value="ABB15744.1"/>
    <property type="molecule type" value="Genomic_DNA"/>
</dbReference>
<dbReference type="RefSeq" id="WP_011344126.1">
    <property type="nucleotide sequence ID" value="NC_007503.1"/>
</dbReference>
<dbReference type="SMR" id="Q3ACT4"/>
<dbReference type="FunCoup" id="Q3ACT4">
    <property type="interactions" value="344"/>
</dbReference>
<dbReference type="STRING" id="246194.CHY_1207"/>
<dbReference type="KEGG" id="chy:CHY_1207"/>
<dbReference type="eggNOG" id="COG0373">
    <property type="taxonomic scope" value="Bacteria"/>
</dbReference>
<dbReference type="HOGENOM" id="CLU_035113_2_2_9"/>
<dbReference type="InParanoid" id="Q3ACT4"/>
<dbReference type="OrthoDB" id="110209at2"/>
<dbReference type="UniPathway" id="UPA00251">
    <property type="reaction ID" value="UER00316"/>
</dbReference>
<dbReference type="Proteomes" id="UP000002706">
    <property type="component" value="Chromosome"/>
</dbReference>
<dbReference type="GO" id="GO:0008883">
    <property type="term" value="F:glutamyl-tRNA reductase activity"/>
    <property type="evidence" value="ECO:0007669"/>
    <property type="project" value="UniProtKB-UniRule"/>
</dbReference>
<dbReference type="GO" id="GO:0050661">
    <property type="term" value="F:NADP binding"/>
    <property type="evidence" value="ECO:0007669"/>
    <property type="project" value="InterPro"/>
</dbReference>
<dbReference type="GO" id="GO:0019353">
    <property type="term" value="P:protoporphyrinogen IX biosynthetic process from glutamate"/>
    <property type="evidence" value="ECO:0007669"/>
    <property type="project" value="TreeGrafter"/>
</dbReference>
<dbReference type="CDD" id="cd05213">
    <property type="entry name" value="NAD_bind_Glutamyl_tRNA_reduct"/>
    <property type="match status" value="1"/>
</dbReference>
<dbReference type="FunFam" id="3.30.460.30:FF:000001">
    <property type="entry name" value="Glutamyl-tRNA reductase"/>
    <property type="match status" value="1"/>
</dbReference>
<dbReference type="FunFam" id="3.40.50.720:FF:000031">
    <property type="entry name" value="Glutamyl-tRNA reductase"/>
    <property type="match status" value="1"/>
</dbReference>
<dbReference type="Gene3D" id="3.30.460.30">
    <property type="entry name" value="Glutamyl-tRNA reductase, N-terminal domain"/>
    <property type="match status" value="1"/>
</dbReference>
<dbReference type="Gene3D" id="3.40.50.720">
    <property type="entry name" value="NAD(P)-binding Rossmann-like Domain"/>
    <property type="match status" value="1"/>
</dbReference>
<dbReference type="HAMAP" id="MF_00087">
    <property type="entry name" value="Glu_tRNA_reductase"/>
    <property type="match status" value="1"/>
</dbReference>
<dbReference type="InterPro" id="IPR000343">
    <property type="entry name" value="4pyrrol_synth_GluRdtase"/>
</dbReference>
<dbReference type="InterPro" id="IPR015896">
    <property type="entry name" value="4pyrrol_synth_GluRdtase_dimer"/>
</dbReference>
<dbReference type="InterPro" id="IPR015895">
    <property type="entry name" value="4pyrrol_synth_GluRdtase_N"/>
</dbReference>
<dbReference type="InterPro" id="IPR018214">
    <property type="entry name" value="GluRdtase_CS"/>
</dbReference>
<dbReference type="InterPro" id="IPR036453">
    <property type="entry name" value="GluRdtase_dimer_dom_sf"/>
</dbReference>
<dbReference type="InterPro" id="IPR036343">
    <property type="entry name" value="GluRdtase_N_sf"/>
</dbReference>
<dbReference type="InterPro" id="IPR036291">
    <property type="entry name" value="NAD(P)-bd_dom_sf"/>
</dbReference>
<dbReference type="InterPro" id="IPR006151">
    <property type="entry name" value="Shikm_DH/Glu-tRNA_Rdtase"/>
</dbReference>
<dbReference type="NCBIfam" id="TIGR01035">
    <property type="entry name" value="hemA"/>
    <property type="match status" value="1"/>
</dbReference>
<dbReference type="NCBIfam" id="NF000744">
    <property type="entry name" value="PRK00045.1-3"/>
    <property type="match status" value="1"/>
</dbReference>
<dbReference type="PANTHER" id="PTHR43013">
    <property type="entry name" value="GLUTAMYL-TRNA REDUCTASE"/>
    <property type="match status" value="1"/>
</dbReference>
<dbReference type="PANTHER" id="PTHR43013:SF1">
    <property type="entry name" value="GLUTAMYL-TRNA REDUCTASE"/>
    <property type="match status" value="1"/>
</dbReference>
<dbReference type="Pfam" id="PF00745">
    <property type="entry name" value="GlutR_dimer"/>
    <property type="match status" value="1"/>
</dbReference>
<dbReference type="Pfam" id="PF05201">
    <property type="entry name" value="GlutR_N"/>
    <property type="match status" value="1"/>
</dbReference>
<dbReference type="Pfam" id="PF01488">
    <property type="entry name" value="Shikimate_DH"/>
    <property type="match status" value="1"/>
</dbReference>
<dbReference type="PIRSF" id="PIRSF000445">
    <property type="entry name" value="4pyrrol_synth_GluRdtase"/>
    <property type="match status" value="1"/>
</dbReference>
<dbReference type="SUPFAM" id="SSF69742">
    <property type="entry name" value="Glutamyl tRNA-reductase catalytic, N-terminal domain"/>
    <property type="match status" value="1"/>
</dbReference>
<dbReference type="SUPFAM" id="SSF69075">
    <property type="entry name" value="Glutamyl tRNA-reductase dimerization domain"/>
    <property type="match status" value="1"/>
</dbReference>
<dbReference type="SUPFAM" id="SSF51735">
    <property type="entry name" value="NAD(P)-binding Rossmann-fold domains"/>
    <property type="match status" value="1"/>
</dbReference>
<dbReference type="PROSITE" id="PS00747">
    <property type="entry name" value="GLUTR"/>
    <property type="match status" value="1"/>
</dbReference>
<name>HEM1_CARHZ</name>
<reference key="1">
    <citation type="journal article" date="2005" name="PLoS Genet.">
        <title>Life in hot carbon monoxide: the complete genome sequence of Carboxydothermus hydrogenoformans Z-2901.</title>
        <authorList>
            <person name="Wu M."/>
            <person name="Ren Q."/>
            <person name="Durkin A.S."/>
            <person name="Daugherty S.C."/>
            <person name="Brinkac L.M."/>
            <person name="Dodson R.J."/>
            <person name="Madupu R."/>
            <person name="Sullivan S.A."/>
            <person name="Kolonay J.F."/>
            <person name="Nelson W.C."/>
            <person name="Tallon L.J."/>
            <person name="Jones K.M."/>
            <person name="Ulrich L.E."/>
            <person name="Gonzalez J.M."/>
            <person name="Zhulin I.B."/>
            <person name="Robb F.T."/>
            <person name="Eisen J.A."/>
        </authorList>
    </citation>
    <scope>NUCLEOTIDE SEQUENCE [LARGE SCALE GENOMIC DNA]</scope>
    <source>
        <strain>ATCC BAA-161 / DSM 6008 / Z-2901</strain>
    </source>
</reference>
<comment type="function">
    <text evidence="1">Catalyzes the NADPH-dependent reduction of glutamyl-tRNA(Glu) to glutamate 1-semialdehyde (GSA).</text>
</comment>
<comment type="catalytic activity">
    <reaction evidence="1">
        <text>(S)-4-amino-5-oxopentanoate + tRNA(Glu) + NADP(+) = L-glutamyl-tRNA(Glu) + NADPH + H(+)</text>
        <dbReference type="Rhea" id="RHEA:12344"/>
        <dbReference type="Rhea" id="RHEA-COMP:9663"/>
        <dbReference type="Rhea" id="RHEA-COMP:9680"/>
        <dbReference type="ChEBI" id="CHEBI:15378"/>
        <dbReference type="ChEBI" id="CHEBI:57501"/>
        <dbReference type="ChEBI" id="CHEBI:57783"/>
        <dbReference type="ChEBI" id="CHEBI:58349"/>
        <dbReference type="ChEBI" id="CHEBI:78442"/>
        <dbReference type="ChEBI" id="CHEBI:78520"/>
        <dbReference type="EC" id="1.2.1.70"/>
    </reaction>
</comment>
<comment type="pathway">
    <text evidence="1">Porphyrin-containing compound metabolism; protoporphyrin-IX biosynthesis; 5-aminolevulinate from L-glutamyl-tRNA(Glu): step 1/2.</text>
</comment>
<comment type="subunit">
    <text evidence="1">Homodimer.</text>
</comment>
<comment type="domain">
    <text evidence="1">Possesses an unusual extended V-shaped dimeric structure with each monomer consisting of three distinct domains arranged along a curved 'spinal' alpha-helix. The N-terminal catalytic domain specifically recognizes the glutamate moiety of the substrate. The second domain is the NADPH-binding domain, and the third C-terminal domain is responsible for dimerization.</text>
</comment>
<comment type="miscellaneous">
    <text evidence="1">During catalysis, the active site Cys acts as a nucleophile attacking the alpha-carbonyl group of tRNA-bound glutamate with the formation of a thioester intermediate between enzyme and glutamate, and the concomitant release of tRNA(Glu). The thioester intermediate is finally reduced by direct hydride transfer from NADPH, to form the product GSA.</text>
</comment>
<comment type="similarity">
    <text evidence="1">Belongs to the glutamyl-tRNA reductase family.</text>
</comment>
<feature type="chain" id="PRO_1000004606" description="Glutamyl-tRNA reductase">
    <location>
        <begin position="1"/>
        <end position="449"/>
    </location>
</feature>
<feature type="region of interest" description="Disordered" evidence="2">
    <location>
        <begin position="427"/>
        <end position="449"/>
    </location>
</feature>
<feature type="active site" description="Nucleophile" evidence="1">
    <location>
        <position position="50"/>
    </location>
</feature>
<feature type="binding site" evidence="1">
    <location>
        <begin position="49"/>
        <end position="52"/>
    </location>
    <ligand>
        <name>substrate</name>
    </ligand>
</feature>
<feature type="binding site" evidence="1">
    <location>
        <position position="109"/>
    </location>
    <ligand>
        <name>substrate</name>
    </ligand>
</feature>
<feature type="binding site" evidence="1">
    <location>
        <begin position="114"/>
        <end position="116"/>
    </location>
    <ligand>
        <name>substrate</name>
    </ligand>
</feature>
<feature type="binding site" evidence="1">
    <location>
        <position position="120"/>
    </location>
    <ligand>
        <name>substrate</name>
    </ligand>
</feature>
<feature type="binding site" evidence="1">
    <location>
        <begin position="189"/>
        <end position="194"/>
    </location>
    <ligand>
        <name>NADP(+)</name>
        <dbReference type="ChEBI" id="CHEBI:58349"/>
    </ligand>
</feature>
<feature type="site" description="Important for activity" evidence="1">
    <location>
        <position position="99"/>
    </location>
</feature>
<sequence length="449" mass="50498">MYLVVVGVNHRTAPVEVREKLSFSDHQLKDAFSALLSYPSIDGSVILSTCNRTEVYVASLDVDTGLKVVREFLANWAGLSLSDIKNYTYNYTLYDAVHHLFRVASGLDSMILGETQILGQVRDAFLKASSLKASNKILNTLFQHAITVGKKVRTETGIDKNPVSISYAAVQLACSFFGSLKDKKALLIGAGKMSSLTAKHLSYYGIKEIIVANRSFEKAEQFAREFNGIAVPFAKIYDILAEVDLVISCTGAPHLIIHKEQLELVIGNRQHPLYLIDIAVPRDIDPEIAKLPNVFLYDIDKLQNVVTKNLEERKKLAEMAENIIETELKAFIEWHSTQFVVPTIVALKKKAEEIKQKELTKALNKLGNISEREKNIVCALAHTILNQLLHTPIVKLKQYALTPQGHLYTEILQNLFDLQVEGERPKNFTHPREEMEESDEKRSYCGESR</sequence>
<protein>
    <recommendedName>
        <fullName evidence="1">Glutamyl-tRNA reductase</fullName>
        <shortName evidence="1">GluTR</shortName>
        <ecNumber evidence="1">1.2.1.70</ecNumber>
    </recommendedName>
</protein>
<gene>
    <name evidence="1" type="primary">hemA</name>
    <name type="ordered locus">CHY_1207</name>
</gene>
<keyword id="KW-0521">NADP</keyword>
<keyword id="KW-0560">Oxidoreductase</keyword>
<keyword id="KW-0627">Porphyrin biosynthesis</keyword>
<keyword id="KW-1185">Reference proteome</keyword>
<organism>
    <name type="scientific">Carboxydothermus hydrogenoformans (strain ATCC BAA-161 / DSM 6008 / Z-2901)</name>
    <dbReference type="NCBI Taxonomy" id="246194"/>
    <lineage>
        <taxon>Bacteria</taxon>
        <taxon>Bacillati</taxon>
        <taxon>Bacillota</taxon>
        <taxon>Clostridia</taxon>
        <taxon>Thermoanaerobacterales</taxon>
        <taxon>Thermoanaerobacteraceae</taxon>
        <taxon>Carboxydothermus</taxon>
    </lineage>
</organism>
<accession>Q3ACT4</accession>